<accession>Q9FI53</accession>
<accession>Q8VY72</accession>
<gene>
    <name evidence="8" type="primary">FUM2</name>
    <name type="ordered locus">At5g50950</name>
    <name type="ORF">K3K7.11</name>
</gene>
<feature type="chain" id="PRO_0000010330" description="Fumarate hydratase 2">
    <location>
        <begin position="1"/>
        <end position="499"/>
    </location>
</feature>
<feature type="region of interest" description="Disordered" evidence="3">
    <location>
        <begin position="19"/>
        <end position="51"/>
    </location>
</feature>
<feature type="compositionally biased region" description="Basic and acidic residues" evidence="3">
    <location>
        <begin position="23"/>
        <end position="45"/>
    </location>
</feature>
<feature type="active site" description="Proton donor/acceptor" evidence="1">
    <location>
        <position position="223"/>
    </location>
</feature>
<feature type="active site" evidence="2">
    <location>
        <position position="353"/>
    </location>
</feature>
<feature type="binding site" evidence="1">
    <location>
        <begin position="134"/>
        <end position="136"/>
    </location>
    <ligand>
        <name>substrate</name>
    </ligand>
</feature>
<feature type="binding site" description="in site B" evidence="1">
    <location>
        <begin position="164"/>
        <end position="167"/>
    </location>
    <ligand>
        <name>substrate</name>
    </ligand>
</feature>
<feature type="binding site" evidence="1">
    <location>
        <begin position="174"/>
        <end position="176"/>
    </location>
    <ligand>
        <name>substrate</name>
    </ligand>
</feature>
<feature type="binding site" evidence="2">
    <location>
        <position position="222"/>
    </location>
    <ligand>
        <name>substrate</name>
    </ligand>
</feature>
<feature type="binding site" evidence="2">
    <location>
        <position position="354"/>
    </location>
    <ligand>
        <name>substrate</name>
    </ligand>
</feature>
<feature type="binding site" evidence="2">
    <location>
        <begin position="359"/>
        <end position="361"/>
    </location>
    <ligand>
        <name>substrate</name>
    </ligand>
</feature>
<feature type="site" description="Important for catalytic activity" evidence="1">
    <location>
        <position position="366"/>
    </location>
</feature>
<feature type="splice variant" id="VSP_011356" description="In isoform 3." evidence="7">
    <original>SFEFK</original>
    <variation>VTHLM</variation>
    <location>
        <begin position="210"/>
        <end position="214"/>
    </location>
</feature>
<feature type="splice variant" id="VSP_011357" description="In isoform 3." evidence="7">
    <location>
        <begin position="215"/>
        <end position="499"/>
    </location>
</feature>
<feature type="splice variant" id="VSP_011355" description="In isoform 2." evidence="10">
    <original>HAAMKLGVLTSEEFDTLVVPEKMIGPSD</original>
    <variation>VNNKLLTFSSLNKSEFKPIFSKRKHVHVCYNIFVVLFWI</variation>
    <location>
        <begin position="472"/>
        <end position="499"/>
    </location>
</feature>
<keyword id="KW-0025">Alternative splicing</keyword>
<keyword id="KW-0963">Cytoplasm</keyword>
<keyword id="KW-0456">Lyase</keyword>
<keyword id="KW-1185">Reference proteome</keyword>
<keyword id="KW-0809">Transit peptide</keyword>
<evidence type="ECO:0000250" key="1">
    <source>
        <dbReference type="UniProtKB" id="P05042"/>
    </source>
</evidence>
<evidence type="ECO:0000250" key="2">
    <source>
        <dbReference type="UniProtKB" id="P9WN93"/>
    </source>
</evidence>
<evidence type="ECO:0000256" key="3">
    <source>
        <dbReference type="SAM" id="MobiDB-lite"/>
    </source>
</evidence>
<evidence type="ECO:0000269" key="4">
    <source>
    </source>
</evidence>
<evidence type="ECO:0000269" key="5">
    <source>
    </source>
</evidence>
<evidence type="ECO:0000269" key="6">
    <source>
    </source>
</evidence>
<evidence type="ECO:0000303" key="7">
    <source>
    </source>
</evidence>
<evidence type="ECO:0000303" key="8">
    <source>
    </source>
</evidence>
<evidence type="ECO:0000303" key="9">
    <source>
    </source>
</evidence>
<evidence type="ECO:0000305" key="10"/>
<organism>
    <name type="scientific">Arabidopsis thaliana</name>
    <name type="common">Mouse-ear cress</name>
    <dbReference type="NCBI Taxonomy" id="3702"/>
    <lineage>
        <taxon>Eukaryota</taxon>
        <taxon>Viridiplantae</taxon>
        <taxon>Streptophyta</taxon>
        <taxon>Embryophyta</taxon>
        <taxon>Tracheophyta</taxon>
        <taxon>Spermatophyta</taxon>
        <taxon>Magnoliopsida</taxon>
        <taxon>eudicotyledons</taxon>
        <taxon>Gunneridae</taxon>
        <taxon>Pentapetalae</taxon>
        <taxon>rosids</taxon>
        <taxon>malvids</taxon>
        <taxon>Brassicales</taxon>
        <taxon>Brassicaceae</taxon>
        <taxon>Camelineae</taxon>
        <taxon>Arabidopsis</taxon>
    </lineage>
</organism>
<reference key="1">
    <citation type="journal article" date="1999" name="DNA Res.">
        <title>Structural analysis of Arabidopsis thaliana chromosome 5. IX. Sequence features of the regions of 1,011,550 bp covered by seventeen P1 and TAC clones.</title>
        <authorList>
            <person name="Kaneko T."/>
            <person name="Katoh T."/>
            <person name="Sato S."/>
            <person name="Nakamura Y."/>
            <person name="Asamizu E."/>
            <person name="Kotani H."/>
            <person name="Miyajima N."/>
            <person name="Tabata S."/>
        </authorList>
    </citation>
    <scope>NUCLEOTIDE SEQUENCE [LARGE SCALE GENOMIC DNA]</scope>
    <source>
        <strain>cv. Columbia</strain>
    </source>
</reference>
<reference key="2">
    <citation type="journal article" date="2017" name="Plant J.">
        <title>Araport11: a complete reannotation of the Arabidopsis thaliana reference genome.</title>
        <authorList>
            <person name="Cheng C.Y."/>
            <person name="Krishnakumar V."/>
            <person name="Chan A.P."/>
            <person name="Thibaud-Nissen F."/>
            <person name="Schobel S."/>
            <person name="Town C.D."/>
        </authorList>
    </citation>
    <scope>GENOME REANNOTATION</scope>
    <source>
        <strain>cv. Columbia</strain>
    </source>
</reference>
<reference key="3">
    <citation type="journal article" date="2003" name="Science">
        <title>Empirical analysis of transcriptional activity in the Arabidopsis genome.</title>
        <authorList>
            <person name="Yamada K."/>
            <person name="Lim J."/>
            <person name="Dale J.M."/>
            <person name="Chen H."/>
            <person name="Shinn P."/>
            <person name="Palm C.J."/>
            <person name="Southwick A.M."/>
            <person name="Wu H.C."/>
            <person name="Kim C.J."/>
            <person name="Nguyen M."/>
            <person name="Pham P.K."/>
            <person name="Cheuk R.F."/>
            <person name="Karlin-Newmann G."/>
            <person name="Liu S.X."/>
            <person name="Lam B."/>
            <person name="Sakano H."/>
            <person name="Wu T."/>
            <person name="Yu G."/>
            <person name="Miranda M."/>
            <person name="Quach H.L."/>
            <person name="Tripp M."/>
            <person name="Chang C.H."/>
            <person name="Lee J.M."/>
            <person name="Toriumi M.J."/>
            <person name="Chan M.M."/>
            <person name="Tang C.C."/>
            <person name="Onodera C.S."/>
            <person name="Deng J.M."/>
            <person name="Akiyama K."/>
            <person name="Ansari Y."/>
            <person name="Arakawa T."/>
            <person name="Banh J."/>
            <person name="Banno F."/>
            <person name="Bowser L."/>
            <person name="Brooks S.Y."/>
            <person name="Carninci P."/>
            <person name="Chao Q."/>
            <person name="Choy N."/>
            <person name="Enju A."/>
            <person name="Goldsmith A.D."/>
            <person name="Gurjal M."/>
            <person name="Hansen N.F."/>
            <person name="Hayashizaki Y."/>
            <person name="Johnson-Hopson C."/>
            <person name="Hsuan V.W."/>
            <person name="Iida K."/>
            <person name="Karnes M."/>
            <person name="Khan S."/>
            <person name="Koesema E."/>
            <person name="Ishida J."/>
            <person name="Jiang P.X."/>
            <person name="Jones T."/>
            <person name="Kawai J."/>
            <person name="Kamiya A."/>
            <person name="Meyers C."/>
            <person name="Nakajima M."/>
            <person name="Narusaka M."/>
            <person name="Seki M."/>
            <person name="Sakurai T."/>
            <person name="Satou M."/>
            <person name="Tamse R."/>
            <person name="Vaysberg M."/>
            <person name="Wallender E.K."/>
            <person name="Wong C."/>
            <person name="Yamamura Y."/>
            <person name="Yuan S."/>
            <person name="Shinozaki K."/>
            <person name="Davis R.W."/>
            <person name="Theologis A."/>
            <person name="Ecker J.R."/>
        </authorList>
    </citation>
    <scope>NUCLEOTIDE SEQUENCE [LARGE SCALE MRNA] (ISOFORMS 1 AND 3)</scope>
    <source>
        <strain>cv. Columbia</strain>
    </source>
</reference>
<reference key="4">
    <citation type="journal article" date="2010" name="Plant J.">
        <title>Arabidopsis has a cytosolic fumarase required for the massive allocation of photosynthate into fumaric acid and for rapid plant growth on high nitrogen.</title>
        <authorList>
            <person name="Pracharoenwattana I."/>
            <person name="Zhou W."/>
            <person name="Keech O."/>
            <person name="Francisco P.B."/>
            <person name="Udomchalothorn T."/>
            <person name="Tschoep H."/>
            <person name="Stitt M."/>
            <person name="Gibon Y."/>
            <person name="Smith S.M."/>
        </authorList>
    </citation>
    <scope>FUNCTION</scope>
    <scope>SUBCELLULAR LOCATION</scope>
    <scope>DISRUPTION PHENOTYPE</scope>
</reference>
<reference key="5">
    <citation type="journal article" date="2016" name="Plant Physiol.">
        <title>FUM2, a cytosolic fumarase, is essential for acclimation to low temperature in Arabidopsis thaliana.</title>
        <authorList>
            <person name="Dyson B.C."/>
            <person name="Miller M.A."/>
            <person name="Feil R."/>
            <person name="Rattray N."/>
            <person name="Bowsher C.G."/>
            <person name="Goodacre R."/>
            <person name="Lunn J.E."/>
            <person name="Johnson G.N."/>
        </authorList>
    </citation>
    <scope>FUNCTION</scope>
</reference>
<reference key="6">
    <citation type="journal article" date="2018" name="FEBS J.">
        <title>The complex allosteric and redox regulation of the fumarate hydratase and malate dehydratase reactions of Arabidopsis thaliana Fumarase 1 and 2 gives clues for understanding the massive accumulation of fumarate.</title>
        <authorList>
            <person name="Zubimendi J.P."/>
            <person name="Martinatto A."/>
            <person name="Valacco M.P."/>
            <person name="Moreno S."/>
            <person name="Andreo C.S."/>
            <person name="Drincovich M.F."/>
            <person name="Tronconi M.A."/>
        </authorList>
    </citation>
    <scope>FUNCTION</scope>
    <scope>CATALYTIC ACTIVITY</scope>
    <scope>BIOPHYSICOCHEMICAL PROPERTIES</scope>
    <scope>ACTIVITY REGULATION</scope>
    <scope>SUBUNIT</scope>
</reference>
<comment type="function">
    <text evidence="4 5 6">Cytosolic fumarate hydratase that catalyzes the reversible stereospecific interconversion of fumarate to L-malate (PubMed:29688630). Catalyzes the dehydration of L-malate to fumarate in the cytosol: required for the massive fumarate accumulation during the day in plants grown under high nitrogen (PubMed:20202172). Also required for acclimation of photosynthesis to cold: acts by mediating accumulation of fumarate at low temperature, leading to reduce accumulation of phosphorylated sugars (PubMed:27440755).</text>
</comment>
<comment type="catalytic activity">
    <reaction evidence="6">
        <text>(S)-malate = fumarate + H2O</text>
        <dbReference type="Rhea" id="RHEA:12460"/>
        <dbReference type="ChEBI" id="CHEBI:15377"/>
        <dbReference type="ChEBI" id="CHEBI:15589"/>
        <dbReference type="ChEBI" id="CHEBI:29806"/>
        <dbReference type="EC" id="4.2.1.2"/>
    </reaction>
    <physiologicalReaction direction="left-to-right" evidence="6">
        <dbReference type="Rhea" id="RHEA:12461"/>
    </physiologicalReaction>
    <physiologicalReaction direction="right-to-left" evidence="6">
        <dbReference type="Rhea" id="RHEA:12462"/>
    </physiologicalReaction>
</comment>
<comment type="activity regulation">
    <text evidence="6">Fumarate hydratase activity (fumarate to L-malate) is strongly inhibited by phosphoenolpyruvate, citrate, oxaloacetate, ATP and ADP (PubMed:29688630). Malate dehydratase activity (malate to fumarate) is activated by oxaloacetate, Asn and Gln (PubMed:29688630). Malate dehydratase activity (malate to fumarate) is inhibited by citrate, succinate, ADP and ATP (PubMed:29688630).</text>
</comment>
<comment type="biophysicochemical properties">
    <kinetics>
        <KM evidence="6">0.4 mM for fumarate (at pH 7.7)</KM>
        <KM evidence="6">0.6 mM for (S)-malate (at pH 7.7)</KM>
        <KM evidence="6">0.5 mM for fumarate (at pH 8.0)</KM>
        <KM evidence="6">1.7 mM for (S)-malate (at pH 8.0)</KM>
        <KM evidence="6">0.5 mM for fumarate (at pH 8.2)</KM>
        <KM evidence="6">1.9 mM for (S)-malate (at pH 8.2)</KM>
        <text evidence="6">kcat is 23.04 sec(-1) for fumarate (at pH 7.7) (PubMed:29688630). kcat is 22.15 sec(-1) for fumarate (at pH 8.0) (PubMed:29688630). kcat is 18.3 sec(-1) for fumarate (at pH 8.2) (PubMed:29688630). kcat is 5.22 sec(-1) for (S)-malate (at pH 7.7) (PubMed:29688630). kcat is 14.79 sec(-1) for (S)-malate (at pH 8.0) (PubMed:29688630). kcat is 17.1 sec(-1) for (S)-malate (at pH 8.2) (PubMed:29688630).</text>
    </kinetics>
</comment>
<comment type="subunit">
    <text evidence="6">Homotetramer.</text>
</comment>
<comment type="subcellular location">
    <subcellularLocation>
        <location evidence="4">Cytoplasm</location>
        <location evidence="4">Cytosol</location>
    </subcellularLocation>
</comment>
<comment type="alternative products">
    <event type="alternative splicing"/>
    <isoform>
        <id>Q9FI53-1</id>
        <name>1</name>
        <sequence type="displayed"/>
    </isoform>
    <isoform>
        <id>Q9FI53-2</id>
        <name>2</name>
        <sequence type="described" ref="VSP_011355"/>
    </isoform>
    <isoform>
        <id>Q9FI53-3</id>
        <name>3</name>
        <sequence type="described" ref="VSP_011356 VSP_011357"/>
    </isoform>
</comment>
<comment type="disruption phenotype">
    <text evidence="4 5">Decreased fumarate levels, while malate levels increase (PubMed:20202172). Leaves display lower levels of many amino acids during the day, but higher levels at night, consistent with a link between fumarate and amino acid metabolism (PubMed:20202172). Plants are unable to acclimate photosynthesis in response to cold (PubMed:27440755).</text>
</comment>
<comment type="miscellaneous">
    <text evidence="1 2">There are 2 substrate-binding sites: the catalytic A site, and the non-catalytic B site that may play a role in the transfer of substrate or product between the active site and the solvent. Alternatively, the B site may bind allosteric effectors.</text>
</comment>
<comment type="similarity">
    <text evidence="10">Belongs to the class-II fumarase/aspartase family. Fumarase subfamily.</text>
</comment>
<name>FUM2_ARATH</name>
<protein>
    <recommendedName>
        <fullName evidence="8">Fumarate hydratase 2</fullName>
        <shortName evidence="9">AtFUM2</shortName>
        <shortName evidence="8">Fumarase 2</shortName>
        <ecNumber evidence="6">4.2.1.2</ecNumber>
    </recommendedName>
</protein>
<sequence>MAALTMQFEGEKKNVSEVADVTLKQEDEQQERRSYSTPFREERDTFGPIQVPSDKLWGAQTQRSLQNFEIGGDRERMPEPIVRAFGVLKKCAAKVNMEYGLDPMIGEAIMEAAQEVAEGKLNDHFPLVVWQTGSGTQSNMNANEVIANRAAEILGHKRGEKIVHPNDHVNRSQSSNDTFPTVMHIAAATEITSRLIPSLKNLHSSLESKSFEFKDIVKIGRTHTQDATPLTLGQEFGGYATQVEYGLNRVACTLPRIYQLAQGGTAVGTGLNTKKGFDVKIAAAVAEETNLPFVTAENKFEALAAHDACVETSGSLNTIATSLMKIANDIRFLGSGPRCGLGELSLPENEPGSSIMPGKVNPTQCEALTMVCAQVMGNHVAVTIGGSNGHFELNVFKPVIASALLHSIRLIADASASFEKNCVRGIEANRERISKLLHESLMLVTSLNPKIGYDNAAAVAKRAHKEGCTLKHAAMKLGVLTSEEFDTLVVPEKMIGPSD</sequence>
<proteinExistence type="evidence at protein level"/>
<dbReference type="EC" id="4.2.1.2" evidence="6"/>
<dbReference type="EMBL" id="AB017063">
    <property type="protein sequence ID" value="BAB08741.1"/>
    <property type="molecule type" value="Genomic_DNA"/>
</dbReference>
<dbReference type="EMBL" id="CP002688">
    <property type="protein sequence ID" value="AED96014.1"/>
    <property type="molecule type" value="Genomic_DNA"/>
</dbReference>
<dbReference type="EMBL" id="CP002688">
    <property type="protein sequence ID" value="AED96015.1"/>
    <property type="molecule type" value="Genomic_DNA"/>
</dbReference>
<dbReference type="EMBL" id="AY052197">
    <property type="protein sequence ID" value="AAK97668.1"/>
    <property type="molecule type" value="mRNA"/>
</dbReference>
<dbReference type="EMBL" id="AY072393">
    <property type="protein sequence ID" value="AAL62385.1"/>
    <property type="molecule type" value="mRNA"/>
</dbReference>
<dbReference type="EMBL" id="AY113070">
    <property type="protein sequence ID" value="AAM47378.1"/>
    <property type="molecule type" value="mRNA"/>
</dbReference>
<dbReference type="RefSeq" id="NP_199908.1">
    <molecule id="Q9FI53-1"/>
    <property type="nucleotide sequence ID" value="NM_124474.4"/>
</dbReference>
<dbReference type="RefSeq" id="NP_851166.1">
    <molecule id="Q9FI53-2"/>
    <property type="nucleotide sequence ID" value="NM_180835.3"/>
</dbReference>
<dbReference type="SMR" id="Q9FI53"/>
<dbReference type="BioGRID" id="20414">
    <property type="interactions" value="1"/>
</dbReference>
<dbReference type="FunCoup" id="Q9FI53">
    <property type="interactions" value="2229"/>
</dbReference>
<dbReference type="IntAct" id="Q9FI53">
    <property type="interactions" value="1"/>
</dbReference>
<dbReference type="STRING" id="3702.Q9FI53"/>
<dbReference type="GlyGen" id="Q9FI53">
    <property type="glycosylation" value="1 site"/>
</dbReference>
<dbReference type="PaxDb" id="3702-AT5G50950.1"/>
<dbReference type="ProteomicsDB" id="228890">
    <molecule id="Q9FI53-1"/>
</dbReference>
<dbReference type="EnsemblPlants" id="AT5G50950.1">
    <molecule id="Q9FI53-2"/>
    <property type="protein sequence ID" value="AT5G50950.1"/>
    <property type="gene ID" value="AT5G50950"/>
</dbReference>
<dbReference type="EnsemblPlants" id="AT5G50950.2">
    <molecule id="Q9FI53-1"/>
    <property type="protein sequence ID" value="AT5G50950.2"/>
    <property type="gene ID" value="AT5G50950"/>
</dbReference>
<dbReference type="GeneID" id="835168"/>
<dbReference type="Gramene" id="AT5G50950.1">
    <molecule id="Q9FI53-2"/>
    <property type="protein sequence ID" value="AT5G50950.1"/>
    <property type="gene ID" value="AT5G50950"/>
</dbReference>
<dbReference type="Gramene" id="AT5G50950.2">
    <molecule id="Q9FI53-1"/>
    <property type="protein sequence ID" value="AT5G50950.2"/>
    <property type="gene ID" value="AT5G50950"/>
</dbReference>
<dbReference type="KEGG" id="ath:AT5G50950"/>
<dbReference type="Araport" id="AT5G50950"/>
<dbReference type="TAIR" id="AT5G50950">
    <property type="gene designation" value="FUM2"/>
</dbReference>
<dbReference type="eggNOG" id="KOG1317">
    <property type="taxonomic scope" value="Eukaryota"/>
</dbReference>
<dbReference type="InParanoid" id="Q9FI53"/>
<dbReference type="OMA" id="PADRYFG"/>
<dbReference type="PhylomeDB" id="Q9FI53"/>
<dbReference type="BioCyc" id="ARA:AT5G50950-MONOMER"/>
<dbReference type="BioCyc" id="MetaCyc:AT5G50950-MONOMER"/>
<dbReference type="BRENDA" id="4.2.1.2">
    <property type="organism ID" value="399"/>
</dbReference>
<dbReference type="SABIO-RK" id="Q9FI53"/>
<dbReference type="PRO" id="PR:Q9FI53"/>
<dbReference type="Proteomes" id="UP000006548">
    <property type="component" value="Chromosome 5"/>
</dbReference>
<dbReference type="ExpressionAtlas" id="Q9FI53">
    <property type="expression patterns" value="baseline and differential"/>
</dbReference>
<dbReference type="GO" id="GO:0005829">
    <property type="term" value="C:cytosol"/>
    <property type="evidence" value="ECO:0000314"/>
    <property type="project" value="TAIR"/>
</dbReference>
<dbReference type="GO" id="GO:0005739">
    <property type="term" value="C:mitochondrion"/>
    <property type="evidence" value="ECO:0007005"/>
    <property type="project" value="TAIR"/>
</dbReference>
<dbReference type="GO" id="GO:0009536">
    <property type="term" value="C:plastid"/>
    <property type="evidence" value="ECO:0007005"/>
    <property type="project" value="TAIR"/>
</dbReference>
<dbReference type="GO" id="GO:0004333">
    <property type="term" value="F:fumarate hydratase activity"/>
    <property type="evidence" value="ECO:0000314"/>
    <property type="project" value="UniProtKB"/>
</dbReference>
<dbReference type="GO" id="GO:0009631">
    <property type="term" value="P:cold acclimation"/>
    <property type="evidence" value="ECO:0000315"/>
    <property type="project" value="TAIR"/>
</dbReference>
<dbReference type="GO" id="GO:0006106">
    <property type="term" value="P:fumarate metabolic process"/>
    <property type="evidence" value="ECO:0000314"/>
    <property type="project" value="UniProtKB"/>
</dbReference>
<dbReference type="GO" id="GO:0006108">
    <property type="term" value="P:malate metabolic process"/>
    <property type="evidence" value="ECO:0000314"/>
    <property type="project" value="UniProtKB"/>
</dbReference>
<dbReference type="GO" id="GO:0042128">
    <property type="term" value="P:nitrate assimilation"/>
    <property type="evidence" value="ECO:0000315"/>
    <property type="project" value="TAIR"/>
</dbReference>
<dbReference type="GO" id="GO:0051262">
    <property type="term" value="P:protein tetramerization"/>
    <property type="evidence" value="ECO:0000314"/>
    <property type="project" value="UniProtKB"/>
</dbReference>
<dbReference type="GO" id="GO:0010109">
    <property type="term" value="P:regulation of photosynthesis"/>
    <property type="evidence" value="ECO:0000315"/>
    <property type="project" value="TAIR"/>
</dbReference>
<dbReference type="GO" id="GO:0006099">
    <property type="term" value="P:tricarboxylic acid cycle"/>
    <property type="evidence" value="ECO:0007669"/>
    <property type="project" value="InterPro"/>
</dbReference>
<dbReference type="CDD" id="cd01362">
    <property type="entry name" value="Fumarase_classII"/>
    <property type="match status" value="1"/>
</dbReference>
<dbReference type="FunFam" id="1.10.40.30:FF:000002">
    <property type="entry name" value="Fumarate hydratase class II"/>
    <property type="match status" value="1"/>
</dbReference>
<dbReference type="FunFam" id="1.10.275.10:FF:000001">
    <property type="entry name" value="Fumarate hydratase, mitochondrial"/>
    <property type="match status" value="1"/>
</dbReference>
<dbReference type="FunFam" id="1.20.200.10:FF:000001">
    <property type="entry name" value="Fumarate hydratase, mitochondrial"/>
    <property type="match status" value="1"/>
</dbReference>
<dbReference type="Gene3D" id="1.10.40.30">
    <property type="entry name" value="Fumarase/aspartase (C-terminal domain)"/>
    <property type="match status" value="1"/>
</dbReference>
<dbReference type="Gene3D" id="1.20.200.10">
    <property type="entry name" value="Fumarase/aspartase (Central domain)"/>
    <property type="match status" value="1"/>
</dbReference>
<dbReference type="Gene3D" id="1.10.275.10">
    <property type="entry name" value="Fumarase/aspartase (N-terminal domain)"/>
    <property type="match status" value="1"/>
</dbReference>
<dbReference type="HAMAP" id="MF_00743">
    <property type="entry name" value="FumaraseC"/>
    <property type="match status" value="1"/>
</dbReference>
<dbReference type="InterPro" id="IPR005677">
    <property type="entry name" value="Fum_hydII"/>
</dbReference>
<dbReference type="InterPro" id="IPR024083">
    <property type="entry name" value="Fumarase/histidase_N"/>
</dbReference>
<dbReference type="InterPro" id="IPR018951">
    <property type="entry name" value="Fumarase_C_C"/>
</dbReference>
<dbReference type="InterPro" id="IPR020557">
    <property type="entry name" value="Fumarate_lyase_CS"/>
</dbReference>
<dbReference type="InterPro" id="IPR000362">
    <property type="entry name" value="Fumarate_lyase_fam"/>
</dbReference>
<dbReference type="InterPro" id="IPR022761">
    <property type="entry name" value="Fumarate_lyase_N"/>
</dbReference>
<dbReference type="InterPro" id="IPR008948">
    <property type="entry name" value="L-Aspartase-like"/>
</dbReference>
<dbReference type="NCBIfam" id="TIGR00979">
    <property type="entry name" value="fumC_II"/>
    <property type="match status" value="1"/>
</dbReference>
<dbReference type="NCBIfam" id="NF008909">
    <property type="entry name" value="PRK12273.1"/>
    <property type="match status" value="1"/>
</dbReference>
<dbReference type="PANTHER" id="PTHR11444">
    <property type="entry name" value="ASPARTATEAMMONIA/ARGININOSUCCINATE/ADENYLOSUCCINATE LYASE"/>
    <property type="match status" value="1"/>
</dbReference>
<dbReference type="PANTHER" id="PTHR11444:SF1">
    <property type="entry name" value="FUMARATE HYDRATASE, MITOCHONDRIAL"/>
    <property type="match status" value="1"/>
</dbReference>
<dbReference type="Pfam" id="PF10415">
    <property type="entry name" value="FumaraseC_C"/>
    <property type="match status" value="1"/>
</dbReference>
<dbReference type="Pfam" id="PF00206">
    <property type="entry name" value="Lyase_1"/>
    <property type="match status" value="1"/>
</dbReference>
<dbReference type="PRINTS" id="PR00149">
    <property type="entry name" value="FUMRATELYASE"/>
</dbReference>
<dbReference type="SUPFAM" id="SSF48557">
    <property type="entry name" value="L-aspartase-like"/>
    <property type="match status" value="1"/>
</dbReference>
<dbReference type="PROSITE" id="PS00163">
    <property type="entry name" value="FUMARATE_LYASES"/>
    <property type="match status" value="1"/>
</dbReference>